<proteinExistence type="evidence at protein level"/>
<keyword id="KW-0975">Bacterial flagellum</keyword>
<keyword id="KW-0903">Direct protein sequencing</keyword>
<keyword id="KW-0574">Periplasm</keyword>
<name>FLA3_SPIAU</name>
<dbReference type="GO" id="GO:0055040">
    <property type="term" value="C:periplasmic flagellum"/>
    <property type="evidence" value="ECO:0007669"/>
    <property type="project" value="UniProtKB-SubCell"/>
</dbReference>
<feature type="chain" id="PRO_0000182630" description="Flagellar filament 32 kDa core protein">
    <location>
        <begin position="1"/>
        <end position="19" status="greater than"/>
    </location>
</feature>
<feature type="non-terminal residue">
    <location>
        <position position="19"/>
    </location>
</feature>
<evidence type="ECO:0000305" key="1"/>
<comment type="function">
    <text>Component of the core of the flagella.</text>
</comment>
<comment type="subunit">
    <text>The flagellum consists of an outer layer composed of repeating units of FlaA around a core that contains one or all of five antigenically related polypeptides.</text>
</comment>
<comment type="subcellular location">
    <subcellularLocation>
        <location>Periplasmic flagellum</location>
    </subcellularLocation>
    <subcellularLocation>
        <location>Periplasm</location>
    </subcellularLocation>
</comment>
<comment type="similarity">
    <text evidence="1">Belongs to the bacterial flagellin family.</text>
</comment>
<accession>P21986</accession>
<sequence>MIINHNMSAINANRVLGBT</sequence>
<organism>
    <name type="scientific">Spirochaeta aurantia</name>
    <dbReference type="NCBI Taxonomy" id="147"/>
    <lineage>
        <taxon>Bacteria</taxon>
        <taxon>Pseudomonadati</taxon>
        <taxon>Spirochaetota</taxon>
        <taxon>Spirochaetia</taxon>
        <taxon>Spirochaetales</taxon>
        <taxon>Spirochaetaceae</taxon>
        <taxon>Spirochaeta</taxon>
    </lineage>
</organism>
<protein>
    <recommendedName>
        <fullName>Flagellar filament 32 kDa core protein</fullName>
    </recommendedName>
    <alternativeName>
        <fullName>32 kDa minor core flagellin</fullName>
    </alternativeName>
</protein>
<reference key="1">
    <citation type="journal article" date="1991" name="J. Bacteriol.">
        <title>N-terminal amino acid sequences and amino acid compositions of the Spirochaeta aurantia flagellar filament polypeptides.</title>
        <authorList>
            <person name="Parales J. Jr."/>
            <person name="Greenberg E.P."/>
        </authorList>
    </citation>
    <scope>PROTEIN SEQUENCE</scope>
    <source>
        <strain>M1</strain>
    </source>
</reference>